<reference key="1">
    <citation type="journal article" date="2004" name="Proc. Natl. Acad. Sci. U.S.A.">
        <title>The genome sequence of the probiotic intestinal bacterium Lactobacillus johnsonii NCC 533.</title>
        <authorList>
            <person name="Pridmore R.D."/>
            <person name="Berger B."/>
            <person name="Desiere F."/>
            <person name="Vilanova D."/>
            <person name="Barretto C."/>
            <person name="Pittet A.-C."/>
            <person name="Zwahlen M.-C."/>
            <person name="Rouvet M."/>
            <person name="Altermann E."/>
            <person name="Barrangou R."/>
            <person name="Mollet B."/>
            <person name="Mercenier A."/>
            <person name="Klaenhammer T."/>
            <person name="Arigoni F."/>
            <person name="Schell M.A."/>
        </authorList>
    </citation>
    <scope>NUCLEOTIDE SEQUENCE [LARGE SCALE GENOMIC DNA]</scope>
    <source>
        <strain>CNCM I-1225 / La1 / NCC 533</strain>
    </source>
</reference>
<name>RL29_LACJO</name>
<protein>
    <recommendedName>
        <fullName evidence="1">Large ribosomal subunit protein uL29</fullName>
    </recommendedName>
    <alternativeName>
        <fullName evidence="2">50S ribosomal protein L29</fullName>
    </alternativeName>
</protein>
<proteinExistence type="inferred from homology"/>
<comment type="similarity">
    <text evidence="1">Belongs to the universal ribosomal protein uL29 family.</text>
</comment>
<feature type="chain" id="PRO_0000130404" description="Large ribosomal subunit protein uL29">
    <location>
        <begin position="1"/>
        <end position="65"/>
    </location>
</feature>
<organism>
    <name type="scientific">Lactobacillus johnsonii (strain CNCM I-12250 / La1 / NCC 533)</name>
    <dbReference type="NCBI Taxonomy" id="257314"/>
    <lineage>
        <taxon>Bacteria</taxon>
        <taxon>Bacillati</taxon>
        <taxon>Bacillota</taxon>
        <taxon>Bacilli</taxon>
        <taxon>Lactobacillales</taxon>
        <taxon>Lactobacillaceae</taxon>
        <taxon>Lactobacillus</taxon>
    </lineage>
</organism>
<sequence>MKAKDIRALTTDQMLEKEKQYKEELFNLRFQQATGQLENTARLRQVRKNIARIKTILSEKELSKN</sequence>
<evidence type="ECO:0000255" key="1">
    <source>
        <dbReference type="HAMAP-Rule" id="MF_00374"/>
    </source>
</evidence>
<evidence type="ECO:0000305" key="2"/>
<gene>
    <name evidence="1" type="primary">rpmC</name>
    <name type="ordered locus">LJ_0346.2</name>
</gene>
<keyword id="KW-0687">Ribonucleoprotein</keyword>
<keyword id="KW-0689">Ribosomal protein</keyword>
<accession>Q74L81</accession>
<dbReference type="EMBL" id="AE017198">
    <property type="protein sequence ID" value="AAS08333.1"/>
    <property type="molecule type" value="Genomic_DNA"/>
</dbReference>
<dbReference type="RefSeq" id="WP_003647828.1">
    <property type="nucleotide sequence ID" value="NC_005362.1"/>
</dbReference>
<dbReference type="SMR" id="Q74L81"/>
<dbReference type="GeneID" id="83569762"/>
<dbReference type="KEGG" id="ljo:LJ_0346b"/>
<dbReference type="eggNOG" id="COG0255">
    <property type="taxonomic scope" value="Bacteria"/>
</dbReference>
<dbReference type="HOGENOM" id="CLU_158491_5_2_9"/>
<dbReference type="Proteomes" id="UP000000581">
    <property type="component" value="Chromosome"/>
</dbReference>
<dbReference type="GO" id="GO:0022625">
    <property type="term" value="C:cytosolic large ribosomal subunit"/>
    <property type="evidence" value="ECO:0007669"/>
    <property type="project" value="TreeGrafter"/>
</dbReference>
<dbReference type="GO" id="GO:0003735">
    <property type="term" value="F:structural constituent of ribosome"/>
    <property type="evidence" value="ECO:0007669"/>
    <property type="project" value="InterPro"/>
</dbReference>
<dbReference type="GO" id="GO:0006412">
    <property type="term" value="P:translation"/>
    <property type="evidence" value="ECO:0007669"/>
    <property type="project" value="UniProtKB-UniRule"/>
</dbReference>
<dbReference type="CDD" id="cd00427">
    <property type="entry name" value="Ribosomal_L29_HIP"/>
    <property type="match status" value="1"/>
</dbReference>
<dbReference type="FunFam" id="1.10.287.310:FF:000001">
    <property type="entry name" value="50S ribosomal protein L29"/>
    <property type="match status" value="1"/>
</dbReference>
<dbReference type="Gene3D" id="1.10.287.310">
    <property type="match status" value="1"/>
</dbReference>
<dbReference type="HAMAP" id="MF_00374">
    <property type="entry name" value="Ribosomal_uL29"/>
    <property type="match status" value="1"/>
</dbReference>
<dbReference type="InterPro" id="IPR050063">
    <property type="entry name" value="Ribosomal_protein_uL29"/>
</dbReference>
<dbReference type="InterPro" id="IPR001854">
    <property type="entry name" value="Ribosomal_uL29"/>
</dbReference>
<dbReference type="InterPro" id="IPR018254">
    <property type="entry name" value="Ribosomal_uL29_CS"/>
</dbReference>
<dbReference type="InterPro" id="IPR036049">
    <property type="entry name" value="Ribosomal_uL29_sf"/>
</dbReference>
<dbReference type="NCBIfam" id="TIGR00012">
    <property type="entry name" value="L29"/>
    <property type="match status" value="1"/>
</dbReference>
<dbReference type="PANTHER" id="PTHR10916">
    <property type="entry name" value="60S RIBOSOMAL PROTEIN L35/50S RIBOSOMAL PROTEIN L29"/>
    <property type="match status" value="1"/>
</dbReference>
<dbReference type="PANTHER" id="PTHR10916:SF0">
    <property type="entry name" value="LARGE RIBOSOMAL SUBUNIT PROTEIN UL29C"/>
    <property type="match status" value="1"/>
</dbReference>
<dbReference type="Pfam" id="PF00831">
    <property type="entry name" value="Ribosomal_L29"/>
    <property type="match status" value="1"/>
</dbReference>
<dbReference type="SUPFAM" id="SSF46561">
    <property type="entry name" value="Ribosomal protein L29 (L29p)"/>
    <property type="match status" value="1"/>
</dbReference>
<dbReference type="PROSITE" id="PS00579">
    <property type="entry name" value="RIBOSOMAL_L29"/>
    <property type="match status" value="1"/>
</dbReference>